<dbReference type="EC" id="4.2.1.59" evidence="1"/>
<dbReference type="EC" id="5.3.3.14" evidence="1"/>
<dbReference type="EMBL" id="CP001600">
    <property type="protein sequence ID" value="ACR68578.1"/>
    <property type="molecule type" value="Genomic_DNA"/>
</dbReference>
<dbReference type="RefSeq" id="WP_015870743.1">
    <property type="nucleotide sequence ID" value="NZ_CP169062.1"/>
</dbReference>
<dbReference type="SMR" id="C5BD83"/>
<dbReference type="STRING" id="67780.B6E78_00295"/>
<dbReference type="GeneID" id="69538398"/>
<dbReference type="KEGG" id="eic:NT01EI_1388"/>
<dbReference type="PATRIC" id="fig|634503.3.peg.1250"/>
<dbReference type="HOGENOM" id="CLU_097925_0_0_6"/>
<dbReference type="OrthoDB" id="9786735at2"/>
<dbReference type="UniPathway" id="UPA00094"/>
<dbReference type="Proteomes" id="UP000001485">
    <property type="component" value="Chromosome"/>
</dbReference>
<dbReference type="GO" id="GO:0005737">
    <property type="term" value="C:cytoplasm"/>
    <property type="evidence" value="ECO:0007669"/>
    <property type="project" value="UniProtKB-SubCell"/>
</dbReference>
<dbReference type="GO" id="GO:0019171">
    <property type="term" value="F:(3R)-hydroxyacyl-[acyl-carrier-protein] dehydratase activity"/>
    <property type="evidence" value="ECO:0007669"/>
    <property type="project" value="UniProtKB-UniRule"/>
</dbReference>
<dbReference type="GO" id="GO:0034017">
    <property type="term" value="F:trans-2-decenoyl-acyl-carrier-protein isomerase activity"/>
    <property type="evidence" value="ECO:0007669"/>
    <property type="project" value="UniProtKB-UniRule"/>
</dbReference>
<dbReference type="GO" id="GO:0006636">
    <property type="term" value="P:unsaturated fatty acid biosynthetic process"/>
    <property type="evidence" value="ECO:0007669"/>
    <property type="project" value="UniProtKB-UniRule"/>
</dbReference>
<dbReference type="CDD" id="cd01287">
    <property type="entry name" value="FabA"/>
    <property type="match status" value="1"/>
</dbReference>
<dbReference type="FunFam" id="3.10.129.10:FF:000003">
    <property type="entry name" value="3-hydroxydecanoyl-[acyl-carrier-protein] dehydratase"/>
    <property type="match status" value="1"/>
</dbReference>
<dbReference type="Gene3D" id="3.10.129.10">
    <property type="entry name" value="Hotdog Thioesterase"/>
    <property type="match status" value="1"/>
</dbReference>
<dbReference type="HAMAP" id="MF_00405">
    <property type="entry name" value="FabA"/>
    <property type="match status" value="1"/>
</dbReference>
<dbReference type="InterPro" id="IPR010083">
    <property type="entry name" value="FabA"/>
</dbReference>
<dbReference type="InterPro" id="IPR013114">
    <property type="entry name" value="FabA_FabZ"/>
</dbReference>
<dbReference type="InterPro" id="IPR029069">
    <property type="entry name" value="HotDog_dom_sf"/>
</dbReference>
<dbReference type="NCBIfam" id="TIGR01749">
    <property type="entry name" value="fabA"/>
    <property type="match status" value="1"/>
</dbReference>
<dbReference type="NCBIfam" id="NF003509">
    <property type="entry name" value="PRK05174.1"/>
    <property type="match status" value="1"/>
</dbReference>
<dbReference type="PANTHER" id="PTHR30272">
    <property type="entry name" value="3-HYDROXYACYL-[ACYL-CARRIER-PROTEIN] DEHYDRATASE"/>
    <property type="match status" value="1"/>
</dbReference>
<dbReference type="PANTHER" id="PTHR30272:SF8">
    <property type="entry name" value="3-HYDROXYDECANOYL-[ACYL-CARRIER-PROTEIN] DEHYDRATASE"/>
    <property type="match status" value="1"/>
</dbReference>
<dbReference type="Pfam" id="PF07977">
    <property type="entry name" value="FabA"/>
    <property type="match status" value="1"/>
</dbReference>
<dbReference type="SUPFAM" id="SSF54637">
    <property type="entry name" value="Thioesterase/thiol ester dehydrase-isomerase"/>
    <property type="match status" value="1"/>
</dbReference>
<comment type="function">
    <text evidence="1">Necessary for the introduction of cis unsaturation into fatty acids. Catalyzes the dehydration of (3R)-3-hydroxydecanoyl-ACP to E-(2)-decenoyl-ACP and then its isomerization to Z-(3)-decenoyl-ACP. Can catalyze the dehydratase reaction for beta-hydroxyacyl-ACPs with saturated chain lengths up to 16:0, being most active on intermediate chain length.</text>
</comment>
<comment type="catalytic activity">
    <reaction evidence="1">
        <text>a (3R)-hydroxyacyl-[ACP] = a (2E)-enoyl-[ACP] + H2O</text>
        <dbReference type="Rhea" id="RHEA:13097"/>
        <dbReference type="Rhea" id="RHEA-COMP:9925"/>
        <dbReference type="Rhea" id="RHEA-COMP:9945"/>
        <dbReference type="ChEBI" id="CHEBI:15377"/>
        <dbReference type="ChEBI" id="CHEBI:78784"/>
        <dbReference type="ChEBI" id="CHEBI:78827"/>
        <dbReference type="EC" id="4.2.1.59"/>
    </reaction>
</comment>
<comment type="catalytic activity">
    <reaction evidence="1">
        <text>(3R)-hydroxydecanoyl-[ACP] = (2E)-decenoyl-[ACP] + H2O</text>
        <dbReference type="Rhea" id="RHEA:41860"/>
        <dbReference type="Rhea" id="RHEA-COMP:9638"/>
        <dbReference type="Rhea" id="RHEA-COMP:9639"/>
        <dbReference type="ChEBI" id="CHEBI:15377"/>
        <dbReference type="ChEBI" id="CHEBI:78466"/>
        <dbReference type="ChEBI" id="CHEBI:78467"/>
    </reaction>
</comment>
<comment type="catalytic activity">
    <reaction evidence="1">
        <text>(2E)-decenoyl-[ACP] = (3Z)-decenoyl-[ACP]</text>
        <dbReference type="Rhea" id="RHEA:23568"/>
        <dbReference type="Rhea" id="RHEA-COMP:9639"/>
        <dbReference type="Rhea" id="RHEA-COMP:9927"/>
        <dbReference type="ChEBI" id="CHEBI:78467"/>
        <dbReference type="ChEBI" id="CHEBI:78798"/>
        <dbReference type="EC" id="5.3.3.14"/>
    </reaction>
</comment>
<comment type="pathway">
    <text evidence="1">Lipid metabolism; fatty acid biosynthesis.</text>
</comment>
<comment type="subunit">
    <text evidence="1">Homodimer.</text>
</comment>
<comment type="subcellular location">
    <subcellularLocation>
        <location evidence="1">Cytoplasm</location>
    </subcellularLocation>
</comment>
<comment type="similarity">
    <text evidence="1">Belongs to the thioester dehydratase family. FabA subfamily.</text>
</comment>
<reference key="1">
    <citation type="submission" date="2009-03" db="EMBL/GenBank/DDBJ databases">
        <title>Complete genome sequence of Edwardsiella ictaluri 93-146.</title>
        <authorList>
            <person name="Williams M.L."/>
            <person name="Gillaspy A.F."/>
            <person name="Dyer D.W."/>
            <person name="Thune R.L."/>
            <person name="Waldbieser G.C."/>
            <person name="Schuster S.C."/>
            <person name="Gipson J."/>
            <person name="Zaitshik J."/>
            <person name="Landry C."/>
            <person name="Lawrence M.L."/>
        </authorList>
    </citation>
    <scope>NUCLEOTIDE SEQUENCE [LARGE SCALE GENOMIC DNA]</scope>
    <source>
        <strain>93-146</strain>
    </source>
</reference>
<accession>C5BD83</accession>
<gene>
    <name evidence="1" type="primary">fabA</name>
    <name type="ordered locus">NT01EI_1388</name>
</gene>
<keyword id="KW-0963">Cytoplasm</keyword>
<keyword id="KW-0275">Fatty acid biosynthesis</keyword>
<keyword id="KW-0276">Fatty acid metabolism</keyword>
<keyword id="KW-0413">Isomerase</keyword>
<keyword id="KW-0444">Lipid biosynthesis</keyword>
<keyword id="KW-0443">Lipid metabolism</keyword>
<keyword id="KW-0456">Lyase</keyword>
<evidence type="ECO:0000255" key="1">
    <source>
        <dbReference type="HAMAP-Rule" id="MF_00405"/>
    </source>
</evidence>
<feature type="chain" id="PRO_1000205933" description="3-hydroxydecanoyl-[acyl-carrier-protein] dehydratase">
    <location>
        <begin position="1"/>
        <end position="172"/>
    </location>
</feature>
<feature type="active site" evidence="1">
    <location>
        <position position="71"/>
    </location>
</feature>
<organism>
    <name type="scientific">Edwardsiella ictaluri (strain 93-146)</name>
    <dbReference type="NCBI Taxonomy" id="634503"/>
    <lineage>
        <taxon>Bacteria</taxon>
        <taxon>Pseudomonadati</taxon>
        <taxon>Pseudomonadota</taxon>
        <taxon>Gammaproteobacteria</taxon>
        <taxon>Enterobacterales</taxon>
        <taxon>Hafniaceae</taxon>
        <taxon>Edwardsiella</taxon>
    </lineage>
</organism>
<proteinExistence type="inferred from homology"/>
<name>FABA_EDWI9</name>
<sequence>MVDKRESYTKTDLEASGRGELFGAGGPPLPSGNMLMMDRVIKMTEDGGSHNKGYVEAELDINPDLWFFACHFVGDPVMPGCLGLDAMWQLVGFYLGWLGGEGKGRALGVGEVKFTGQVLPTAKKVTYRIHFKRVINRKLIMGLADGEVLVDGKLIYTANDLKVGLFKDTSAF</sequence>
<protein>
    <recommendedName>
        <fullName evidence="1">3-hydroxydecanoyl-[acyl-carrier-protein] dehydratase</fullName>
        <ecNumber evidence="1">4.2.1.59</ecNumber>
    </recommendedName>
    <alternativeName>
        <fullName evidence="1">3-hydroxyacyl-[acyl-carrier-protein] dehydratase FabA</fullName>
    </alternativeName>
    <alternativeName>
        <fullName evidence="1">Beta-hydroxydecanoyl thioester dehydrase</fullName>
    </alternativeName>
    <alternativeName>
        <fullName evidence="1">Trans-2-decenoyl-[acyl-carrier-protein] isomerase</fullName>
        <ecNumber evidence="1">5.3.3.14</ecNumber>
    </alternativeName>
</protein>